<proteinExistence type="inferred from homology"/>
<comment type="function">
    <text evidence="1">Activates ribosomal RNA transcription. Plays a direct role in upstream activation of rRNA promoters.</text>
</comment>
<comment type="subunit">
    <text evidence="1">Homodimer.</text>
</comment>
<comment type="similarity">
    <text evidence="1">Belongs to the transcriptional regulatory Fis family.</text>
</comment>
<gene>
    <name evidence="1" type="primary">fis</name>
    <name type="ordered locus">AHA_3511</name>
</gene>
<dbReference type="EMBL" id="CP000462">
    <property type="protein sequence ID" value="ABK36227.1"/>
    <property type="molecule type" value="Genomic_DNA"/>
</dbReference>
<dbReference type="RefSeq" id="WP_005309538.1">
    <property type="nucleotide sequence ID" value="NC_008570.1"/>
</dbReference>
<dbReference type="RefSeq" id="YP_857985.1">
    <property type="nucleotide sequence ID" value="NC_008570.1"/>
</dbReference>
<dbReference type="SMR" id="A0KNY4"/>
<dbReference type="STRING" id="380703.AHA_3511"/>
<dbReference type="EnsemblBacteria" id="ABK36227">
    <property type="protein sequence ID" value="ABK36227"/>
    <property type="gene ID" value="AHA_3511"/>
</dbReference>
<dbReference type="GeneID" id="97857240"/>
<dbReference type="KEGG" id="aha:AHA_3511"/>
<dbReference type="PATRIC" id="fig|380703.7.peg.3499"/>
<dbReference type="eggNOG" id="COG2901">
    <property type="taxonomic scope" value="Bacteria"/>
</dbReference>
<dbReference type="HOGENOM" id="CLU_158040_3_0_6"/>
<dbReference type="OrthoDB" id="9802388at2"/>
<dbReference type="PRO" id="PR:A0KNY4"/>
<dbReference type="Proteomes" id="UP000000756">
    <property type="component" value="Chromosome"/>
</dbReference>
<dbReference type="GO" id="GO:0003700">
    <property type="term" value="F:DNA-binding transcription factor activity"/>
    <property type="evidence" value="ECO:0007669"/>
    <property type="project" value="UniProtKB-UniRule"/>
</dbReference>
<dbReference type="GO" id="GO:0043565">
    <property type="term" value="F:sequence-specific DNA binding"/>
    <property type="evidence" value="ECO:0007669"/>
    <property type="project" value="InterPro"/>
</dbReference>
<dbReference type="FunFam" id="1.10.10.60:FF:000006">
    <property type="entry name" value="DNA-binding protein Fis"/>
    <property type="match status" value="1"/>
</dbReference>
<dbReference type="Gene3D" id="1.10.10.60">
    <property type="entry name" value="Homeodomain-like"/>
    <property type="match status" value="1"/>
</dbReference>
<dbReference type="HAMAP" id="MF_00166">
    <property type="entry name" value="DNA_binding_Fis"/>
    <property type="match status" value="1"/>
</dbReference>
<dbReference type="InterPro" id="IPR005412">
    <property type="entry name" value="Fis_DNA-bd"/>
</dbReference>
<dbReference type="InterPro" id="IPR009057">
    <property type="entry name" value="Homeodomain-like_sf"/>
</dbReference>
<dbReference type="InterPro" id="IPR002197">
    <property type="entry name" value="HTH_Fis"/>
</dbReference>
<dbReference type="InterPro" id="IPR050207">
    <property type="entry name" value="Trans_regulatory_Fis"/>
</dbReference>
<dbReference type="NCBIfam" id="NF001659">
    <property type="entry name" value="PRK00430.1"/>
    <property type="match status" value="1"/>
</dbReference>
<dbReference type="PANTHER" id="PTHR47918">
    <property type="entry name" value="DNA-BINDING PROTEIN FIS"/>
    <property type="match status" value="1"/>
</dbReference>
<dbReference type="PANTHER" id="PTHR47918:SF1">
    <property type="entry name" value="DNA-BINDING PROTEIN FIS"/>
    <property type="match status" value="1"/>
</dbReference>
<dbReference type="Pfam" id="PF02954">
    <property type="entry name" value="HTH_8"/>
    <property type="match status" value="1"/>
</dbReference>
<dbReference type="PIRSF" id="PIRSF002097">
    <property type="entry name" value="DNA-binding_Fis"/>
    <property type="match status" value="1"/>
</dbReference>
<dbReference type="PRINTS" id="PR01591">
    <property type="entry name" value="DNABINDNGFIS"/>
</dbReference>
<dbReference type="PRINTS" id="PR01590">
    <property type="entry name" value="HTHFIS"/>
</dbReference>
<dbReference type="SUPFAM" id="SSF46689">
    <property type="entry name" value="Homeodomain-like"/>
    <property type="match status" value="1"/>
</dbReference>
<name>FIS_AERHH</name>
<sequence>MFEQTLTSDALVTTTHNHAAEPTQRPLRDSVQQALRNYLAQLNGQEVIDLYDMVLSEVEAPMLDVIMQYTRGNQTRAAVMMGINRGTLRKKLKRYGMN</sequence>
<reference key="1">
    <citation type="journal article" date="2006" name="J. Bacteriol.">
        <title>Genome sequence of Aeromonas hydrophila ATCC 7966T: jack of all trades.</title>
        <authorList>
            <person name="Seshadri R."/>
            <person name="Joseph S.W."/>
            <person name="Chopra A.K."/>
            <person name="Sha J."/>
            <person name="Shaw J."/>
            <person name="Graf J."/>
            <person name="Haft D.H."/>
            <person name="Wu M."/>
            <person name="Ren Q."/>
            <person name="Rosovitz M.J."/>
            <person name="Madupu R."/>
            <person name="Tallon L."/>
            <person name="Kim M."/>
            <person name="Jin S."/>
            <person name="Vuong H."/>
            <person name="Stine O.C."/>
            <person name="Ali A."/>
            <person name="Horneman A.J."/>
            <person name="Heidelberg J.F."/>
        </authorList>
    </citation>
    <scope>NUCLEOTIDE SEQUENCE [LARGE SCALE GENOMIC DNA]</scope>
    <source>
        <strain>ATCC 7966 / DSM 30187 / BCRC 13018 / CCUG 14551 / JCM 1027 / KCTC 2358 / NCIMB 9240 / NCTC 8049</strain>
    </source>
</reference>
<evidence type="ECO:0000255" key="1">
    <source>
        <dbReference type="HAMAP-Rule" id="MF_00166"/>
    </source>
</evidence>
<organism>
    <name type="scientific">Aeromonas hydrophila subsp. hydrophila (strain ATCC 7966 / DSM 30187 / BCRC 13018 / CCUG 14551 / JCM 1027 / KCTC 2358 / NCIMB 9240 / NCTC 8049)</name>
    <dbReference type="NCBI Taxonomy" id="380703"/>
    <lineage>
        <taxon>Bacteria</taxon>
        <taxon>Pseudomonadati</taxon>
        <taxon>Pseudomonadota</taxon>
        <taxon>Gammaproteobacteria</taxon>
        <taxon>Aeromonadales</taxon>
        <taxon>Aeromonadaceae</taxon>
        <taxon>Aeromonas</taxon>
    </lineage>
</organism>
<keyword id="KW-0010">Activator</keyword>
<keyword id="KW-0238">DNA-binding</keyword>
<keyword id="KW-1185">Reference proteome</keyword>
<keyword id="KW-0804">Transcription</keyword>
<keyword id="KW-0805">Transcription regulation</keyword>
<feature type="chain" id="PRO_1000023320" description="DNA-binding protein Fis">
    <location>
        <begin position="1"/>
        <end position="98"/>
    </location>
</feature>
<feature type="DNA-binding region" description="H-T-H motif" evidence="1">
    <location>
        <begin position="74"/>
        <end position="93"/>
    </location>
</feature>
<accession>A0KNY4</accession>
<protein>
    <recommendedName>
        <fullName evidence="1">DNA-binding protein Fis</fullName>
    </recommendedName>
</protein>